<protein>
    <recommendedName>
        <fullName evidence="1">Ribulose bisphosphate carboxylase small subunit, chloroplastic 1</fullName>
        <shortName evidence="1">RuBisCO small subunit 1</shortName>
        <shortName evidence="3">RuBisCO small subunit SSU1</shortName>
    </recommendedName>
</protein>
<gene>
    <name evidence="1" type="primary">RBCS1</name>
    <name evidence="3" type="synonym">SSU1</name>
</gene>
<accession>P00872</accession>
<comment type="function">
    <text evidence="1">RuBisCO catalyzes two reactions: the carboxylation of D-ribulose 1,5-bisphosphate, the primary event in carbon dioxide fixation, as well as the oxidative fragmentation of the pentose substrate. Both reactions occur simultaneously and in competition at the same active site. Although the small subunit is not catalytic it is essential for maximal activity.</text>
</comment>
<comment type="subunit">
    <text evidence="1">Heterohexadecamer of 8 large and 8 small subunits.</text>
</comment>
<comment type="subcellular location">
    <subcellularLocation>
        <location evidence="1">Plastid</location>
        <location evidence="1">Chloroplast</location>
    </subcellularLocation>
</comment>
<comment type="induction">
    <text evidence="2">Accumulates to high levels when grown under continuous white light.</text>
</comment>
<comment type="miscellaneous">
    <text>This protein is coded by one member of a small multigene family.</text>
</comment>
<comment type="miscellaneous">
    <text evidence="1">The basic functional RuBisCO is composed of a large chain homodimer in a 'head-to-tail' conformation. In form I RuBisCO this homodimer is arranged in a barrel-like tetramer with the small subunits forming a tetrameric 'cap' on each end of the 'barrel'.</text>
</comment>
<comment type="similarity">
    <text evidence="1">Belongs to the RuBisCO small chain family.</text>
</comment>
<comment type="sequence caution" evidence="4">
    <conflict type="erroneous initiation">
        <sequence resource="EMBL-CDS" id="CAA24969"/>
    </conflict>
</comment>
<dbReference type="EMBL" id="X17235">
    <property type="protein sequence ID" value="CAA35104.1"/>
    <property type="molecule type" value="mRNA"/>
</dbReference>
<dbReference type="EMBL" id="X00137">
    <property type="protein sequence ID" value="CAA24969.1"/>
    <property type="status" value="ALT_INIT"/>
    <property type="molecule type" value="mRNA"/>
</dbReference>
<dbReference type="PIR" id="A01091">
    <property type="entry name" value="RKDWS"/>
</dbReference>
<dbReference type="SMR" id="P00872"/>
<dbReference type="GO" id="GO:0009507">
    <property type="term" value="C:chloroplast"/>
    <property type="evidence" value="ECO:0007669"/>
    <property type="project" value="UniProtKB-SubCell"/>
</dbReference>
<dbReference type="GO" id="GO:0016984">
    <property type="term" value="F:ribulose-bisphosphate carboxylase activity"/>
    <property type="evidence" value="ECO:0007669"/>
    <property type="project" value="UniProtKB-UniRule"/>
</dbReference>
<dbReference type="GO" id="GO:0009853">
    <property type="term" value="P:photorespiration"/>
    <property type="evidence" value="ECO:0007669"/>
    <property type="project" value="UniProtKB-KW"/>
</dbReference>
<dbReference type="GO" id="GO:0019253">
    <property type="term" value="P:reductive pentose-phosphate cycle"/>
    <property type="evidence" value="ECO:0007669"/>
    <property type="project" value="UniProtKB-UniRule"/>
</dbReference>
<dbReference type="CDD" id="cd03527">
    <property type="entry name" value="RuBisCO_small"/>
    <property type="match status" value="1"/>
</dbReference>
<dbReference type="FunFam" id="3.30.190.10:FF:000001">
    <property type="entry name" value="Ribulose bisphosphate carboxylase small chain, chloroplastic"/>
    <property type="match status" value="1"/>
</dbReference>
<dbReference type="Gene3D" id="3.30.190.10">
    <property type="entry name" value="Ribulose bisphosphate carboxylase, small subunit"/>
    <property type="match status" value="1"/>
</dbReference>
<dbReference type="HAMAP" id="MF_00859">
    <property type="entry name" value="RuBisCO_S_bact"/>
    <property type="match status" value="1"/>
</dbReference>
<dbReference type="InterPro" id="IPR024681">
    <property type="entry name" value="RuBisCO_ssu"/>
</dbReference>
<dbReference type="InterPro" id="IPR000894">
    <property type="entry name" value="RuBisCO_ssu_dom"/>
</dbReference>
<dbReference type="InterPro" id="IPR024680">
    <property type="entry name" value="RuBisCO_ssu_N"/>
</dbReference>
<dbReference type="InterPro" id="IPR036385">
    <property type="entry name" value="RuBisCO_ssu_sf"/>
</dbReference>
<dbReference type="PANTHER" id="PTHR31262">
    <property type="entry name" value="RIBULOSE BISPHOSPHATE CARBOXYLASE SMALL CHAIN 1, CHLOROPLASTIC"/>
    <property type="match status" value="1"/>
</dbReference>
<dbReference type="PANTHER" id="PTHR31262:SF10">
    <property type="entry name" value="RIBULOSE BISPHOSPHATE CARBOXYLASE SMALL SUBUNIT 1A, CHLOROPLASTIC-RELATED"/>
    <property type="match status" value="1"/>
</dbReference>
<dbReference type="Pfam" id="PF12338">
    <property type="entry name" value="RbcS"/>
    <property type="match status" value="1"/>
</dbReference>
<dbReference type="Pfam" id="PF00101">
    <property type="entry name" value="RuBisCO_small"/>
    <property type="match status" value="1"/>
</dbReference>
<dbReference type="PRINTS" id="PR00152">
    <property type="entry name" value="RUBISCOSMALL"/>
</dbReference>
<dbReference type="SMART" id="SM00961">
    <property type="entry name" value="RuBisCO_small"/>
    <property type="match status" value="1"/>
</dbReference>
<dbReference type="SUPFAM" id="SSF55239">
    <property type="entry name" value="RuBisCO, small subunit"/>
    <property type="match status" value="1"/>
</dbReference>
<name>RBS1_LEMGI</name>
<feature type="transit peptide" description="Chloroplast" evidence="1">
    <location>
        <begin position="1"/>
        <end position="52"/>
    </location>
</feature>
<feature type="chain" id="PRO_0000031512" description="Ribulose bisphosphate carboxylase small subunit, chloroplastic 1" evidence="1">
    <location>
        <begin position="53"/>
        <end position="173"/>
    </location>
</feature>
<feature type="sequence conflict" description="In Ref. 2; CAA24969." evidence="4" ref="2">
    <original>LPPL</original>
    <variation>FPLS</variation>
    <location>
        <begin position="71"/>
        <end position="74"/>
    </location>
</feature>
<evidence type="ECO:0000255" key="1">
    <source>
        <dbReference type="HAMAP-Rule" id="MF_00860"/>
    </source>
</evidence>
<evidence type="ECO:0000269" key="2">
    <source>
    </source>
</evidence>
<evidence type="ECO:0000303" key="3">
    <source>
    </source>
</evidence>
<evidence type="ECO:0000305" key="4"/>
<keyword id="KW-0113">Calvin cycle</keyword>
<keyword id="KW-0120">Carbon dioxide fixation</keyword>
<keyword id="KW-0150">Chloroplast</keyword>
<keyword id="KW-0601">Photorespiration</keyword>
<keyword id="KW-0602">Photosynthesis</keyword>
<keyword id="KW-0934">Plastid</keyword>
<keyword id="KW-0809">Transit peptide</keyword>
<organism>
    <name type="scientific">Lemna gibba</name>
    <name type="common">Swollen duckweed</name>
    <dbReference type="NCBI Taxonomy" id="4470"/>
    <lineage>
        <taxon>Eukaryota</taxon>
        <taxon>Viridiplantae</taxon>
        <taxon>Streptophyta</taxon>
        <taxon>Embryophyta</taxon>
        <taxon>Tracheophyta</taxon>
        <taxon>Spermatophyta</taxon>
        <taxon>Magnoliopsida</taxon>
        <taxon>Liliopsida</taxon>
        <taxon>Araceae</taxon>
        <taxon>Lemnoideae</taxon>
        <taxon>Lemna</taxon>
    </lineage>
</organism>
<sequence length="173" mass="19522">MMVSTAAVARVRPAQTNMVGAFNGCRSSVAFPATRKANNDLSTLPSSGGRVSCMQVWPPEGLKKFETLSYLPPLSVEDLAKEVDYLLRNDWVPCIEFSKEGFVYRENNASPGYYDGRYWTMWKLPMFGCTDASQVIAEVEEAKKAYPEYFVRIIGFDNKRQVQCISFIAYKPT</sequence>
<proteinExistence type="evidence at transcript level"/>
<reference key="1">
    <citation type="journal article" date="1990" name="Plant Mol. Biol.">
        <title>Differential expression of individual genes encoding the small subunit of ribulose-1,5-bisphosphate carboxylase in Lemna gibba.</title>
        <authorList>
            <person name="Silverthorne J."/>
            <person name="Wimpee C.F."/>
            <person name="Yamada T."/>
            <person name="Rolfe S.A."/>
            <person name="Tobin E.M."/>
        </authorList>
    </citation>
    <scope>NUCLEOTIDE SEQUENCE [MRNA]</scope>
    <scope>INDUCTION</scope>
</reference>
<reference key="2">
    <citation type="journal article" date="1983" name="Nucleic Acids Res.">
        <title>Nucleotide sequence encoding the precursor of the small subunit of ribulose 1,5-bisphosphate carboxylase from Lemna gibba L.G-3.</title>
        <authorList>
            <person name="Stiekema W.J."/>
            <person name="Wimpee C.F."/>
            <person name="Tobin E.M."/>
        </authorList>
    </citation>
    <scope>NUCLEOTIDE SEQUENCE [MRNA]</scope>
</reference>